<sequence length="618" mass="73272">MHLSKIIFLLIILFPYHVNSRKPIKYKNVNNVFIEIYPCKAIKWERKKKKRDLIKNNKLIHNVDVNYINMITNDNHISSEKCRDIKKKRKITSSEYGMSLEFFKKNPKKVVQNLKKRGMEKYLNVIVMLKKLINEKNENEVLRNKLRNRRKLLSDHIKNLIFNSKKYEDIINRDITNDSDHKTNLIHVDEEKKKTEKKNDTQDILKDNQKIRYINKENQATNNNINNQDNSNDVLKKNKIQIEEIKKETNQINKDIDHIEMNIINLKKKIEFNLYKLPNILLNKVPKGKTTEDNKIIKFYKKENIIQLNNEEYDFIEPHEEIIKKYENNFIFSNISNKIGFGYNILVNDIAKLERALIDFMINTHVNKFLYTYVKAPEIVTKSALFNTGQLPKFEEDLFKITDNYKLLNEDAYLIPTSEVSLLNLFKNSQIDYIHLPIKLVSHSSCFRTEKNNTYGKTSKGLLREHIFQKVELINITDKKTSPFYYKKLIKQSTYILKQLNIPYRLVLLNSIETPYSASICYDIEAWLPSQQRYVEVSSCSNCLDFQARRLNLKYKIKDSNNFCHTINGSGLAVGRVLAIILEQYQIKKKHKNEITKIQVPKVLRKYMNKDIIQVEYN</sequence>
<accession>Q8I5P7</accession>
<accession>A0A143ZZQ0</accession>
<protein>
    <recommendedName>
        <fullName>Serine--tRNA ligase, cytoplasmic</fullName>
        <ecNumber evidence="1">6.1.1.11</ecNumber>
    </recommendedName>
    <alternativeName>
        <fullName>Seryl-tRNA synthetase</fullName>
        <shortName evidence="1">SerRS</shortName>
    </alternativeName>
    <alternativeName>
        <fullName evidence="1">Seryl-tRNA(Ser/Sec) synthetase</fullName>
    </alternativeName>
</protein>
<comment type="function">
    <text evidence="1">Catalyzes the attachment of serine to tRNA(Ser). Is also able to aminoacylate tRNA(Sec) with serine, to form the misacylated tRNA L-seryl-tRNA(Sec), which will be further converted into selenocysteinyl-tRNA(Sec) (By similarity).</text>
</comment>
<comment type="catalytic activity">
    <reaction evidence="1">
        <text>tRNA(Ser) + L-serine + ATP = L-seryl-tRNA(Ser) + AMP + diphosphate + H(+)</text>
        <dbReference type="Rhea" id="RHEA:12292"/>
        <dbReference type="Rhea" id="RHEA-COMP:9669"/>
        <dbReference type="Rhea" id="RHEA-COMP:9703"/>
        <dbReference type="ChEBI" id="CHEBI:15378"/>
        <dbReference type="ChEBI" id="CHEBI:30616"/>
        <dbReference type="ChEBI" id="CHEBI:33019"/>
        <dbReference type="ChEBI" id="CHEBI:33384"/>
        <dbReference type="ChEBI" id="CHEBI:78442"/>
        <dbReference type="ChEBI" id="CHEBI:78533"/>
        <dbReference type="ChEBI" id="CHEBI:456215"/>
        <dbReference type="EC" id="6.1.1.11"/>
    </reaction>
</comment>
<comment type="catalytic activity">
    <reaction evidence="1">
        <text>tRNA(Sec) + L-serine + ATP = L-seryl-tRNA(Sec) + AMP + diphosphate + H(+)</text>
        <dbReference type="Rhea" id="RHEA:42580"/>
        <dbReference type="Rhea" id="RHEA-COMP:9742"/>
        <dbReference type="Rhea" id="RHEA-COMP:10128"/>
        <dbReference type="ChEBI" id="CHEBI:15378"/>
        <dbReference type="ChEBI" id="CHEBI:30616"/>
        <dbReference type="ChEBI" id="CHEBI:33019"/>
        <dbReference type="ChEBI" id="CHEBI:33384"/>
        <dbReference type="ChEBI" id="CHEBI:78442"/>
        <dbReference type="ChEBI" id="CHEBI:78533"/>
        <dbReference type="ChEBI" id="CHEBI:456215"/>
        <dbReference type="EC" id="6.1.1.11"/>
    </reaction>
</comment>
<comment type="pathway">
    <text evidence="1">Aminoacyl-tRNA biosynthesis; selenocysteinyl-tRNA(Sec) biosynthesis; L-seryl-tRNA(Sec) from L-serine and tRNA(Sec): step 1/1.</text>
</comment>
<comment type="subunit">
    <text evidence="1">Homodimer. The tRNA molecule binds across the dimer (By similarity).</text>
</comment>
<comment type="subcellular location">
    <subcellularLocation>
        <location evidence="2">Cytoplasm</location>
    </subcellularLocation>
</comment>
<comment type="domain">
    <text evidence="1">Consists of two distinct domains, a catalytic core and a N-terminal extension that is involved in tRNA binding.</text>
</comment>
<comment type="biotechnology">
    <text evidence="4">Possible candidate for an effective malaria vaccine as determined by epitope response in sera.</text>
</comment>
<comment type="similarity">
    <text evidence="3">Belongs to the class-II aminoacyl-tRNA synthetase family. Type-1 seryl-tRNA synthetase subfamily.</text>
</comment>
<feature type="chain" id="PRO_0000370214" description="Serine--tRNA ligase, cytoplasmic">
    <location>
        <begin position="1"/>
        <end position="618"/>
    </location>
</feature>
<feature type="binding site" evidence="1">
    <location>
        <begin position="417"/>
        <end position="419"/>
    </location>
    <ligand>
        <name>L-serine</name>
        <dbReference type="ChEBI" id="CHEBI:33384"/>
    </ligand>
</feature>
<feature type="binding site" evidence="1">
    <location>
        <begin position="448"/>
        <end position="450"/>
    </location>
    <ligand>
        <name>ATP</name>
        <dbReference type="ChEBI" id="CHEBI:30616"/>
    </ligand>
</feature>
<feature type="binding site" evidence="1">
    <location>
        <position position="472"/>
    </location>
    <ligand>
        <name>L-serine</name>
        <dbReference type="ChEBI" id="CHEBI:33384"/>
    </ligand>
</feature>
<feature type="binding site" evidence="1">
    <location>
        <begin position="536"/>
        <end position="539"/>
    </location>
    <ligand>
        <name>ATP</name>
        <dbReference type="ChEBI" id="CHEBI:30616"/>
    </ligand>
</feature>
<feature type="binding site" evidence="1">
    <location>
        <position position="570"/>
    </location>
    <ligand>
        <name>L-serine</name>
        <dbReference type="ChEBI" id="CHEBI:33384"/>
    </ligand>
</feature>
<proteinExistence type="evidence at protein level"/>
<evidence type="ECO:0000250" key="1">
    <source>
        <dbReference type="UniProtKB" id="P34945"/>
    </source>
</evidence>
<evidence type="ECO:0000250" key="2">
    <source>
        <dbReference type="UniProtKB" id="P49591"/>
    </source>
</evidence>
<evidence type="ECO:0000255" key="3"/>
<evidence type="ECO:0000269" key="4">
    <source>
    </source>
</evidence>
<evidence type="ECO:0000305" key="5"/>
<keyword id="KW-0030">Aminoacyl-tRNA synthetase</keyword>
<keyword id="KW-0067">ATP-binding</keyword>
<keyword id="KW-0963">Cytoplasm</keyword>
<keyword id="KW-0436">Ligase</keyword>
<keyword id="KW-0477">Merozoite</keyword>
<keyword id="KW-0547">Nucleotide-binding</keyword>
<keyword id="KW-0648">Protein biosynthesis</keyword>
<keyword id="KW-1185">Reference proteome</keyword>
<gene>
    <name type="ORF">PF3D7_1216000</name>
    <name type="ORF">PFL0770w</name>
</gene>
<dbReference type="EC" id="6.1.1.11" evidence="1"/>
<dbReference type="EMBL" id="LN999947">
    <property type="protein sequence ID" value="CZT99321.1"/>
    <property type="molecule type" value="Genomic_DNA"/>
</dbReference>
<dbReference type="RefSeq" id="XP_001350563.1">
    <property type="nucleotide sequence ID" value="XM_001350527.1"/>
</dbReference>
<dbReference type="SMR" id="Q8I5P7"/>
<dbReference type="FunCoup" id="Q8I5P7">
    <property type="interactions" value="37"/>
</dbReference>
<dbReference type="STRING" id="36329.Q8I5P7"/>
<dbReference type="PaxDb" id="5833-PFL0770w"/>
<dbReference type="EnsemblProtists" id="CZT99321">
    <property type="protein sequence ID" value="CZT99321"/>
    <property type="gene ID" value="PF3D7_1216000"/>
</dbReference>
<dbReference type="GeneID" id="811207"/>
<dbReference type="KEGG" id="pfa:PF3D7_1216000"/>
<dbReference type="VEuPathDB" id="PlasmoDB:PF3D7_1216000"/>
<dbReference type="HOGENOM" id="CLU_023797_1_1_1"/>
<dbReference type="InParanoid" id="Q8I5P7"/>
<dbReference type="OMA" id="INFMINT"/>
<dbReference type="OrthoDB" id="10264585at2759"/>
<dbReference type="PhylomeDB" id="Q8I5P7"/>
<dbReference type="UniPathway" id="UPA00906">
    <property type="reaction ID" value="UER00895"/>
</dbReference>
<dbReference type="Proteomes" id="UP000001450">
    <property type="component" value="Chromosome 12"/>
</dbReference>
<dbReference type="GO" id="GO:0005829">
    <property type="term" value="C:cytosol"/>
    <property type="evidence" value="ECO:0000250"/>
    <property type="project" value="UniProtKB"/>
</dbReference>
<dbReference type="GO" id="GO:0016020">
    <property type="term" value="C:membrane"/>
    <property type="evidence" value="ECO:0000303"/>
    <property type="project" value="UniProtKB"/>
</dbReference>
<dbReference type="GO" id="GO:0005739">
    <property type="term" value="C:mitochondrion"/>
    <property type="evidence" value="ECO:0000303"/>
    <property type="project" value="UniProtKB"/>
</dbReference>
<dbReference type="GO" id="GO:0005524">
    <property type="term" value="F:ATP binding"/>
    <property type="evidence" value="ECO:0007669"/>
    <property type="project" value="UniProtKB-KW"/>
</dbReference>
<dbReference type="GO" id="GO:0004828">
    <property type="term" value="F:serine-tRNA ligase activity"/>
    <property type="evidence" value="ECO:0000250"/>
    <property type="project" value="UniProtKB"/>
</dbReference>
<dbReference type="GO" id="GO:0002181">
    <property type="term" value="P:cytoplasmic translation"/>
    <property type="evidence" value="ECO:0000250"/>
    <property type="project" value="UniProtKB"/>
</dbReference>
<dbReference type="GO" id="GO:0006434">
    <property type="term" value="P:seryl-tRNA aminoacylation"/>
    <property type="evidence" value="ECO:0000250"/>
    <property type="project" value="UniProtKB"/>
</dbReference>
<dbReference type="FunFam" id="3.30.930.10:FF:000109">
    <property type="entry name" value="Seryl-tRNA synthetase, cytoplasmic"/>
    <property type="match status" value="1"/>
</dbReference>
<dbReference type="Gene3D" id="3.30.930.10">
    <property type="entry name" value="Bira Bifunctional Protein, Domain 2"/>
    <property type="match status" value="1"/>
</dbReference>
<dbReference type="InterPro" id="IPR002314">
    <property type="entry name" value="aa-tRNA-synt_IIb"/>
</dbReference>
<dbReference type="InterPro" id="IPR006195">
    <property type="entry name" value="aa-tRNA-synth_II"/>
</dbReference>
<dbReference type="InterPro" id="IPR045864">
    <property type="entry name" value="aa-tRNA-synth_II/BPL/LPL"/>
</dbReference>
<dbReference type="InterPro" id="IPR002317">
    <property type="entry name" value="Ser-tRNA-ligase_type_1"/>
</dbReference>
<dbReference type="NCBIfam" id="TIGR00414">
    <property type="entry name" value="serS"/>
    <property type="match status" value="1"/>
</dbReference>
<dbReference type="PANTHER" id="PTHR43697:SF1">
    <property type="entry name" value="SERINE--TRNA LIGASE"/>
    <property type="match status" value="1"/>
</dbReference>
<dbReference type="PANTHER" id="PTHR43697">
    <property type="entry name" value="SERYL-TRNA SYNTHETASE"/>
    <property type="match status" value="1"/>
</dbReference>
<dbReference type="Pfam" id="PF00587">
    <property type="entry name" value="tRNA-synt_2b"/>
    <property type="match status" value="1"/>
</dbReference>
<dbReference type="PRINTS" id="PR00981">
    <property type="entry name" value="TRNASYNTHSER"/>
</dbReference>
<dbReference type="SUPFAM" id="SSF55681">
    <property type="entry name" value="Class II aaRS and biotin synthetases"/>
    <property type="match status" value="1"/>
</dbReference>
<dbReference type="PROSITE" id="PS50862">
    <property type="entry name" value="AA_TRNA_LIGASE_II"/>
    <property type="match status" value="1"/>
</dbReference>
<name>SYSC_PLAF7</name>
<organism>
    <name type="scientific">Plasmodium falciparum (isolate 3D7)</name>
    <dbReference type="NCBI Taxonomy" id="36329"/>
    <lineage>
        <taxon>Eukaryota</taxon>
        <taxon>Sar</taxon>
        <taxon>Alveolata</taxon>
        <taxon>Apicomplexa</taxon>
        <taxon>Aconoidasida</taxon>
        <taxon>Haemosporida</taxon>
        <taxon>Plasmodiidae</taxon>
        <taxon>Plasmodium</taxon>
        <taxon>Plasmodium (Laverania)</taxon>
    </lineage>
</organism>
<reference key="1">
    <citation type="journal article" date="2002" name="Nature">
        <title>Genome sequence of the human malaria parasite Plasmodium falciparum.</title>
        <authorList>
            <person name="Gardner M.J."/>
            <person name="Hall N."/>
            <person name="Fung E."/>
            <person name="White O."/>
            <person name="Berriman M."/>
            <person name="Hyman R.W."/>
            <person name="Carlton J.M."/>
            <person name="Pain A."/>
            <person name="Nelson K.E."/>
            <person name="Bowman S."/>
            <person name="Paulsen I.T."/>
            <person name="James K.D."/>
            <person name="Eisen J.A."/>
            <person name="Rutherford K.M."/>
            <person name="Salzberg S.L."/>
            <person name="Craig A."/>
            <person name="Kyes S."/>
            <person name="Chan M.-S."/>
            <person name="Nene V."/>
            <person name="Shallom S.J."/>
            <person name="Suh B."/>
            <person name="Peterson J."/>
            <person name="Angiuoli S."/>
            <person name="Pertea M."/>
            <person name="Allen J."/>
            <person name="Selengut J."/>
            <person name="Haft D."/>
            <person name="Mather M.W."/>
            <person name="Vaidya A.B."/>
            <person name="Martin D.M.A."/>
            <person name="Fairlamb A.H."/>
            <person name="Fraunholz M.J."/>
            <person name="Roos D.S."/>
            <person name="Ralph S.A."/>
            <person name="McFadden G.I."/>
            <person name="Cummings L.M."/>
            <person name="Subramanian G.M."/>
            <person name="Mungall C."/>
            <person name="Venter J.C."/>
            <person name="Carucci D.J."/>
            <person name="Hoffman S.L."/>
            <person name="Newbold C."/>
            <person name="Davis R.W."/>
            <person name="Fraser C.M."/>
            <person name="Barrell B.G."/>
        </authorList>
    </citation>
    <scope>NUCLEOTIDE SEQUENCE [LARGE SCALE GENOMIC DNA]</scope>
    <source>
        <strain>3D7</strain>
    </source>
</reference>
<reference evidence="5" key="2">
    <citation type="journal article" date="2007" name="PLoS ONE">
        <title>Rapid identification of malaria vaccine candidates based on alpha-helical coiled coil protein motif.</title>
        <authorList>
            <person name="Villard V."/>
            <person name="Agak G.W."/>
            <person name="Frank G."/>
            <person name="Jafarshad A."/>
            <person name="Servis C."/>
            <person name="Nebie I."/>
            <person name="Sirima S.B."/>
            <person name="Felger I."/>
            <person name="Arevalo-Herrera M."/>
            <person name="Herrera S."/>
            <person name="Heitz F."/>
            <person name="Baecker V."/>
            <person name="Druilhe P."/>
            <person name="Kajava A.V."/>
            <person name="Corradin G."/>
        </authorList>
    </citation>
    <scope>SYNTHESIS OF 239-272</scope>
    <scope>POSSIBLE CANDIDATE MALARIA EPITOPE</scope>
</reference>